<dbReference type="EMBL" id="CP000903">
    <property type="protein sequence ID" value="ABY44852.1"/>
    <property type="molecule type" value="Genomic_DNA"/>
</dbReference>
<dbReference type="RefSeq" id="WP_000124776.1">
    <property type="nucleotide sequence ID" value="NZ_CAKMRX030000111.1"/>
</dbReference>
<dbReference type="SMR" id="A9VT96"/>
<dbReference type="GeneID" id="93007254"/>
<dbReference type="KEGG" id="bwe:BcerKBAB4_3681"/>
<dbReference type="eggNOG" id="COG0227">
    <property type="taxonomic scope" value="Bacteria"/>
</dbReference>
<dbReference type="HOGENOM" id="CLU_064548_7_1_9"/>
<dbReference type="Proteomes" id="UP000002154">
    <property type="component" value="Chromosome"/>
</dbReference>
<dbReference type="GO" id="GO:1990904">
    <property type="term" value="C:ribonucleoprotein complex"/>
    <property type="evidence" value="ECO:0007669"/>
    <property type="project" value="UniProtKB-KW"/>
</dbReference>
<dbReference type="GO" id="GO:0005840">
    <property type="term" value="C:ribosome"/>
    <property type="evidence" value="ECO:0007669"/>
    <property type="project" value="UniProtKB-KW"/>
</dbReference>
<dbReference type="GO" id="GO:0003735">
    <property type="term" value="F:structural constituent of ribosome"/>
    <property type="evidence" value="ECO:0007669"/>
    <property type="project" value="InterPro"/>
</dbReference>
<dbReference type="GO" id="GO:0006412">
    <property type="term" value="P:translation"/>
    <property type="evidence" value="ECO:0007669"/>
    <property type="project" value="UniProtKB-UniRule"/>
</dbReference>
<dbReference type="Gene3D" id="2.30.170.40">
    <property type="entry name" value="Ribosomal protein L28/L24"/>
    <property type="match status" value="1"/>
</dbReference>
<dbReference type="HAMAP" id="MF_00373">
    <property type="entry name" value="Ribosomal_bL28"/>
    <property type="match status" value="1"/>
</dbReference>
<dbReference type="InterPro" id="IPR050096">
    <property type="entry name" value="Bacterial_rp_bL28"/>
</dbReference>
<dbReference type="InterPro" id="IPR026569">
    <property type="entry name" value="Ribosomal_bL28"/>
</dbReference>
<dbReference type="InterPro" id="IPR034704">
    <property type="entry name" value="Ribosomal_bL28/bL31-like_sf"/>
</dbReference>
<dbReference type="InterPro" id="IPR001383">
    <property type="entry name" value="Ribosomal_bL28_bact-type"/>
</dbReference>
<dbReference type="InterPro" id="IPR037147">
    <property type="entry name" value="Ribosomal_bL28_sf"/>
</dbReference>
<dbReference type="NCBIfam" id="TIGR00009">
    <property type="entry name" value="L28"/>
    <property type="match status" value="1"/>
</dbReference>
<dbReference type="PANTHER" id="PTHR39080">
    <property type="entry name" value="50S RIBOSOMAL PROTEIN L28"/>
    <property type="match status" value="1"/>
</dbReference>
<dbReference type="PANTHER" id="PTHR39080:SF1">
    <property type="entry name" value="LARGE RIBOSOMAL SUBUNIT PROTEIN BL28A"/>
    <property type="match status" value="1"/>
</dbReference>
<dbReference type="Pfam" id="PF00830">
    <property type="entry name" value="Ribosomal_L28"/>
    <property type="match status" value="1"/>
</dbReference>
<dbReference type="SUPFAM" id="SSF143800">
    <property type="entry name" value="L28p-like"/>
    <property type="match status" value="1"/>
</dbReference>
<comment type="similarity">
    <text evidence="1">Belongs to the bacterial ribosomal protein bL28 family.</text>
</comment>
<name>RL28_BACMK</name>
<evidence type="ECO:0000255" key="1">
    <source>
        <dbReference type="HAMAP-Rule" id="MF_00373"/>
    </source>
</evidence>
<evidence type="ECO:0000256" key="2">
    <source>
        <dbReference type="SAM" id="MobiDB-lite"/>
    </source>
</evidence>
<evidence type="ECO:0000305" key="3"/>
<gene>
    <name evidence="1" type="primary">rpmB</name>
    <name type="ordered locus">BcerKBAB4_3681</name>
</gene>
<feature type="chain" id="PRO_1000121585" description="Large ribosomal subunit protein bL28">
    <location>
        <begin position="1"/>
        <end position="62"/>
    </location>
</feature>
<feature type="region of interest" description="Disordered" evidence="2">
    <location>
        <begin position="1"/>
        <end position="28"/>
    </location>
</feature>
<keyword id="KW-0687">Ribonucleoprotein</keyword>
<keyword id="KW-0689">Ribosomal protein</keyword>
<proteinExistence type="inferred from homology"/>
<organism>
    <name type="scientific">Bacillus mycoides (strain KBAB4)</name>
    <name type="common">Bacillus weihenstephanensis</name>
    <dbReference type="NCBI Taxonomy" id="315730"/>
    <lineage>
        <taxon>Bacteria</taxon>
        <taxon>Bacillati</taxon>
        <taxon>Bacillota</taxon>
        <taxon>Bacilli</taxon>
        <taxon>Bacillales</taxon>
        <taxon>Bacillaceae</taxon>
        <taxon>Bacillus</taxon>
        <taxon>Bacillus cereus group</taxon>
    </lineage>
</organism>
<accession>A9VT96</accession>
<protein>
    <recommendedName>
        <fullName evidence="1">Large ribosomal subunit protein bL28</fullName>
    </recommendedName>
    <alternativeName>
        <fullName evidence="3">50S ribosomal protein L28</fullName>
    </alternativeName>
</protein>
<reference key="1">
    <citation type="journal article" date="2008" name="Chem. Biol. Interact.">
        <title>Extending the Bacillus cereus group genomics to putative food-borne pathogens of different toxicity.</title>
        <authorList>
            <person name="Lapidus A."/>
            <person name="Goltsman E."/>
            <person name="Auger S."/>
            <person name="Galleron N."/>
            <person name="Segurens B."/>
            <person name="Dossat C."/>
            <person name="Land M.L."/>
            <person name="Broussolle V."/>
            <person name="Brillard J."/>
            <person name="Guinebretiere M.-H."/>
            <person name="Sanchis V."/>
            <person name="Nguen-the C."/>
            <person name="Lereclus D."/>
            <person name="Richardson P."/>
            <person name="Wincker P."/>
            <person name="Weissenbach J."/>
            <person name="Ehrlich S.D."/>
            <person name="Sorokin A."/>
        </authorList>
    </citation>
    <scope>NUCLEOTIDE SEQUENCE [LARGE SCALE GENOMIC DNA]</scope>
    <source>
        <strain>KBAB4</strain>
    </source>
</reference>
<sequence length="62" mass="6923">MARVCAITGRKARSGNSRSHAMNATKRKWGANLQKVRVRIDGKVQRVYVSARALKSGKIERV</sequence>